<keyword id="KW-0175">Coiled coil</keyword>
<keyword id="KW-0325">Glycoprotein</keyword>
<keyword id="KW-0732">Signal</keyword>
<accession>P22311</accession>
<proteinExistence type="evidence at transcript level"/>
<sequence length="286" mass="32035">MKQFIVLTVVLLAIQELQGGAVLTVDEKCTCKDTLNTLSKDDLILRLITCTQRNENLEGIITAIKKDNDFLNKENDALRAQNCELTAQLAKEKKAREAAENALCECQKNSELLKQTIEQLKKELAQTKQELANCKEALANCKAENAKLLKKIEELNCTITQLQEELEQCRARERDLQCQLDECNKKLTICNNELIACRKQQEELRCEIERLNAEIKRLEAQNAACENALNTLRCETSEFLAIATQRQSKLTTIIQSAEAESTAIGASYIGFRNTHDLTCAPCGGPA</sequence>
<dbReference type="EMBL" id="X51680">
    <property type="protein sequence ID" value="CAA35983.1"/>
    <property type="molecule type" value="mRNA"/>
</dbReference>
<dbReference type="PIR" id="S07532">
    <property type="entry name" value="S07532"/>
</dbReference>
<dbReference type="SMR" id="P22311"/>
<dbReference type="GlyCosmos" id="P22311">
    <property type="glycosylation" value="1 site, No reported glycans"/>
</dbReference>
<dbReference type="OrthoDB" id="10255522at2759"/>
<dbReference type="Gene3D" id="1.10.287.1490">
    <property type="match status" value="1"/>
</dbReference>
<dbReference type="SUPFAM" id="SSF57997">
    <property type="entry name" value="Tropomyosin"/>
    <property type="match status" value="1"/>
</dbReference>
<feature type="signal peptide" evidence="1">
    <location>
        <begin position="1"/>
        <end position="19"/>
    </location>
</feature>
<feature type="chain" id="PRO_0000022192" description="Puff II/9-1 protein">
    <location>
        <begin position="20"/>
        <end position="286"/>
    </location>
</feature>
<feature type="region of interest" description="Helical" evidence="1">
    <location>
        <begin position="61"/>
        <end position="235"/>
    </location>
</feature>
<feature type="glycosylation site" description="N-linked (GlcNAc...) asparagine" evidence="1">
    <location>
        <position position="156"/>
    </location>
</feature>
<protein>
    <recommendedName>
        <fullName>Puff II/9-1 protein</fullName>
    </recommendedName>
</protein>
<evidence type="ECO:0000255" key="1"/>
<gene>
    <name type="primary">II/9-1</name>
</gene>
<comment type="miscellaneous">
    <text>The DNA puff II/9 proteins have a proposed intermolecular coiled coil structure with possibly intermolecular disulfide bridges formed by numerous cysteine residues in position D of the heptad repeat.</text>
</comment>
<reference key="1">
    <citation type="journal article" date="1989" name="J. Mol. Biol.">
        <title>Molecular characterization of DNA puff II/9A genes in Sciara coprophila.</title>
        <authorList>
            <person name="Dibartolomeis S.M."/>
            <person name="Gerbi S.A."/>
        </authorList>
    </citation>
    <scope>NUCLEOTIDE SEQUENCE [MRNA]</scope>
    <source>
        <strain>6980</strain>
    </source>
</reference>
<name>PU91_BRACO</name>
<organism>
    <name type="scientific">Bradysia coprophila</name>
    <name type="common">Dark-winged fungus gnat</name>
    <name type="synonym">Sciara coprophila</name>
    <dbReference type="NCBI Taxonomy" id="38358"/>
    <lineage>
        <taxon>Eukaryota</taxon>
        <taxon>Metazoa</taxon>
        <taxon>Ecdysozoa</taxon>
        <taxon>Arthropoda</taxon>
        <taxon>Hexapoda</taxon>
        <taxon>Insecta</taxon>
        <taxon>Pterygota</taxon>
        <taxon>Neoptera</taxon>
        <taxon>Endopterygota</taxon>
        <taxon>Diptera</taxon>
        <taxon>Nematocera</taxon>
        <taxon>Sciaroidea</taxon>
        <taxon>Sciaridae</taxon>
        <taxon>Bradysia</taxon>
    </lineage>
</organism>